<protein>
    <recommendedName>
        <fullName evidence="1">Kynureninase</fullName>
        <ecNumber evidence="1">3.7.1.3</ecNumber>
    </recommendedName>
    <alternativeName>
        <fullName evidence="1">L-kynurenine hydrolase</fullName>
    </alternativeName>
</protein>
<evidence type="ECO:0000255" key="1">
    <source>
        <dbReference type="HAMAP-Rule" id="MF_01970"/>
    </source>
</evidence>
<accession>Q736W3</accession>
<dbReference type="EC" id="3.7.1.3" evidence="1"/>
<dbReference type="EMBL" id="AE017194">
    <property type="protein sequence ID" value="AAS41699.1"/>
    <property type="molecule type" value="Genomic_DNA"/>
</dbReference>
<dbReference type="SMR" id="Q736W3"/>
<dbReference type="KEGG" id="bca:BCE_2787"/>
<dbReference type="HOGENOM" id="CLU_003433_4_0_9"/>
<dbReference type="UniPathway" id="UPA00253">
    <property type="reaction ID" value="UER00329"/>
</dbReference>
<dbReference type="UniPathway" id="UPA00334">
    <property type="reaction ID" value="UER00455"/>
</dbReference>
<dbReference type="Proteomes" id="UP000002527">
    <property type="component" value="Chromosome"/>
</dbReference>
<dbReference type="GO" id="GO:0005737">
    <property type="term" value="C:cytoplasm"/>
    <property type="evidence" value="ECO:0007669"/>
    <property type="project" value="InterPro"/>
</dbReference>
<dbReference type="GO" id="GO:0030429">
    <property type="term" value="F:kynureninase activity"/>
    <property type="evidence" value="ECO:0007669"/>
    <property type="project" value="UniProtKB-UniRule"/>
</dbReference>
<dbReference type="GO" id="GO:0030170">
    <property type="term" value="F:pyridoxal phosphate binding"/>
    <property type="evidence" value="ECO:0007669"/>
    <property type="project" value="UniProtKB-UniRule"/>
</dbReference>
<dbReference type="GO" id="GO:0043420">
    <property type="term" value="P:anthranilate metabolic process"/>
    <property type="evidence" value="ECO:0007669"/>
    <property type="project" value="TreeGrafter"/>
</dbReference>
<dbReference type="GO" id="GO:0097053">
    <property type="term" value="P:L-kynurenine catabolic process"/>
    <property type="evidence" value="ECO:0007669"/>
    <property type="project" value="UniProtKB-UniRule"/>
</dbReference>
<dbReference type="GO" id="GO:0019441">
    <property type="term" value="P:L-tryptophan catabolic process to kynurenine"/>
    <property type="evidence" value="ECO:0007669"/>
    <property type="project" value="TreeGrafter"/>
</dbReference>
<dbReference type="GO" id="GO:0009435">
    <property type="term" value="P:NAD biosynthetic process"/>
    <property type="evidence" value="ECO:0007669"/>
    <property type="project" value="UniProtKB-UniPathway"/>
</dbReference>
<dbReference type="GO" id="GO:0019805">
    <property type="term" value="P:quinolinate biosynthetic process"/>
    <property type="evidence" value="ECO:0007669"/>
    <property type="project" value="UniProtKB-UniRule"/>
</dbReference>
<dbReference type="FunFam" id="3.40.640.10:FF:000031">
    <property type="entry name" value="Kynureninase"/>
    <property type="match status" value="1"/>
</dbReference>
<dbReference type="Gene3D" id="3.90.1150.10">
    <property type="entry name" value="Aspartate Aminotransferase, domain 1"/>
    <property type="match status" value="1"/>
</dbReference>
<dbReference type="Gene3D" id="3.40.640.10">
    <property type="entry name" value="Type I PLP-dependent aspartate aminotransferase-like (Major domain)"/>
    <property type="match status" value="1"/>
</dbReference>
<dbReference type="HAMAP" id="MF_01970">
    <property type="entry name" value="Kynureninase"/>
    <property type="match status" value="1"/>
</dbReference>
<dbReference type="InterPro" id="IPR010111">
    <property type="entry name" value="Kynureninase"/>
</dbReference>
<dbReference type="InterPro" id="IPR015424">
    <property type="entry name" value="PyrdxlP-dep_Trfase"/>
</dbReference>
<dbReference type="InterPro" id="IPR015421">
    <property type="entry name" value="PyrdxlP-dep_Trfase_major"/>
</dbReference>
<dbReference type="InterPro" id="IPR015422">
    <property type="entry name" value="PyrdxlP-dep_Trfase_small"/>
</dbReference>
<dbReference type="NCBIfam" id="TIGR01814">
    <property type="entry name" value="kynureninase"/>
    <property type="match status" value="1"/>
</dbReference>
<dbReference type="PANTHER" id="PTHR14084">
    <property type="entry name" value="KYNURENINASE"/>
    <property type="match status" value="1"/>
</dbReference>
<dbReference type="PANTHER" id="PTHR14084:SF0">
    <property type="entry name" value="KYNURENINASE"/>
    <property type="match status" value="1"/>
</dbReference>
<dbReference type="Pfam" id="PF22580">
    <property type="entry name" value="KYNU_C"/>
    <property type="match status" value="1"/>
</dbReference>
<dbReference type="PIRSF" id="PIRSF038800">
    <property type="entry name" value="KYNU"/>
    <property type="match status" value="1"/>
</dbReference>
<dbReference type="SUPFAM" id="SSF53383">
    <property type="entry name" value="PLP-dependent transferases"/>
    <property type="match status" value="1"/>
</dbReference>
<keyword id="KW-0378">Hydrolase</keyword>
<keyword id="KW-0662">Pyridine nucleotide biosynthesis</keyword>
<keyword id="KW-0663">Pyridoxal phosphate</keyword>
<name>KYNU_BACC1</name>
<comment type="function">
    <text evidence="1">Catalyzes the cleavage of L-kynurenine (L-Kyn) and L-3-hydroxykynurenine (L-3OHKyn) into anthranilic acid (AA) and 3-hydroxyanthranilic acid (3-OHAA), respectively.</text>
</comment>
<comment type="catalytic activity">
    <reaction evidence="1">
        <text>L-kynurenine + H2O = anthranilate + L-alanine + H(+)</text>
        <dbReference type="Rhea" id="RHEA:16813"/>
        <dbReference type="ChEBI" id="CHEBI:15377"/>
        <dbReference type="ChEBI" id="CHEBI:15378"/>
        <dbReference type="ChEBI" id="CHEBI:16567"/>
        <dbReference type="ChEBI" id="CHEBI:57959"/>
        <dbReference type="ChEBI" id="CHEBI:57972"/>
        <dbReference type="EC" id="3.7.1.3"/>
    </reaction>
</comment>
<comment type="catalytic activity">
    <reaction evidence="1">
        <text>3-hydroxy-L-kynurenine + H2O = 3-hydroxyanthranilate + L-alanine + H(+)</text>
        <dbReference type="Rhea" id="RHEA:25143"/>
        <dbReference type="ChEBI" id="CHEBI:15377"/>
        <dbReference type="ChEBI" id="CHEBI:15378"/>
        <dbReference type="ChEBI" id="CHEBI:36559"/>
        <dbReference type="ChEBI" id="CHEBI:57972"/>
        <dbReference type="ChEBI" id="CHEBI:58125"/>
        <dbReference type="EC" id="3.7.1.3"/>
    </reaction>
</comment>
<comment type="cofactor">
    <cofactor evidence="1">
        <name>pyridoxal 5'-phosphate</name>
        <dbReference type="ChEBI" id="CHEBI:597326"/>
    </cofactor>
</comment>
<comment type="pathway">
    <text evidence="1">Amino-acid degradation; L-kynurenine degradation; L-alanine and anthranilate from L-kynurenine: step 1/1.</text>
</comment>
<comment type="pathway">
    <text evidence="1">Cofactor biosynthesis; NAD(+) biosynthesis; quinolinate from L-kynurenine: step 2/3.</text>
</comment>
<comment type="subunit">
    <text evidence="1">Homodimer.</text>
</comment>
<comment type="similarity">
    <text evidence="1">Belongs to the kynureninase family.</text>
</comment>
<organism>
    <name type="scientific">Bacillus cereus (strain ATCC 10987 / NRS 248)</name>
    <dbReference type="NCBI Taxonomy" id="222523"/>
    <lineage>
        <taxon>Bacteria</taxon>
        <taxon>Bacillati</taxon>
        <taxon>Bacillota</taxon>
        <taxon>Bacilli</taxon>
        <taxon>Bacillales</taxon>
        <taxon>Bacillaceae</taxon>
        <taxon>Bacillus</taxon>
        <taxon>Bacillus cereus group</taxon>
    </lineage>
</organism>
<sequence length="428" mass="48542">MYTEPFQPTYEYALECDKHDELKDFQTEFYKKEGTIYLDGNSLGLLSKRAEKSLLTLLDSWKEYGIDGWTEGEHPWFFLSEKLGELTAPLIGALPEETIVTGSTTTNIHQVIATFYEPKGIRTKILADELTFPSDIYALQSQIRLKGLDPDEHLVRVKSRDGRTLSEDDIIHAMTDDIALILLPSVLYRSGQVLDMKRLTAEAHKRGIHIGFDLCHSIGSIPHHFKEWDVDFAIWCNYKYLNAGPGGVAGLYVNKKHCNRLPGLSGWFSSRKDKQFDMEHTLTAADHAGAYQIGTPHVLSTAPLIGSLEIFKEAGIERLREKSLHITSYMLNLIAHELSDFEFTIGNPLEDEKRGGHIYLEHAEAARICKALKADGVIPDFRAPNGVRLAPVALYNTYEEVWKSVQILKKIMKDEEYKQFENKREVVA</sequence>
<feature type="chain" id="PRO_0000356988" description="Kynureninase">
    <location>
        <begin position="1"/>
        <end position="428"/>
    </location>
</feature>
<feature type="binding site" evidence="1">
    <location>
        <position position="104"/>
    </location>
    <ligand>
        <name>pyridoxal 5'-phosphate</name>
        <dbReference type="ChEBI" id="CHEBI:597326"/>
    </ligand>
</feature>
<feature type="binding site" evidence="1">
    <location>
        <position position="105"/>
    </location>
    <ligand>
        <name>pyridoxal 5'-phosphate</name>
        <dbReference type="ChEBI" id="CHEBI:597326"/>
    </ligand>
</feature>
<feature type="binding site" evidence="1">
    <location>
        <begin position="132"/>
        <end position="135"/>
    </location>
    <ligand>
        <name>pyridoxal 5'-phosphate</name>
        <dbReference type="ChEBI" id="CHEBI:597326"/>
    </ligand>
</feature>
<feature type="binding site" evidence="1">
    <location>
        <position position="213"/>
    </location>
    <ligand>
        <name>pyridoxal 5'-phosphate</name>
        <dbReference type="ChEBI" id="CHEBI:597326"/>
    </ligand>
</feature>
<feature type="binding site" evidence="1">
    <location>
        <position position="216"/>
    </location>
    <ligand>
        <name>pyridoxal 5'-phosphate</name>
        <dbReference type="ChEBI" id="CHEBI:597326"/>
    </ligand>
</feature>
<feature type="binding site" evidence="1">
    <location>
        <position position="238"/>
    </location>
    <ligand>
        <name>pyridoxal 5'-phosphate</name>
        <dbReference type="ChEBI" id="CHEBI:597326"/>
    </ligand>
</feature>
<feature type="binding site" evidence="1">
    <location>
        <position position="267"/>
    </location>
    <ligand>
        <name>pyridoxal 5'-phosphate</name>
        <dbReference type="ChEBI" id="CHEBI:597326"/>
    </ligand>
</feature>
<feature type="binding site" evidence="1">
    <location>
        <position position="295"/>
    </location>
    <ligand>
        <name>pyridoxal 5'-phosphate</name>
        <dbReference type="ChEBI" id="CHEBI:597326"/>
    </ligand>
</feature>
<feature type="modified residue" description="N6-(pyridoxal phosphate)lysine" evidence="1">
    <location>
        <position position="239"/>
    </location>
</feature>
<proteinExistence type="inferred from homology"/>
<gene>
    <name evidence="1" type="primary">kynU</name>
    <name type="ordered locus">BCE_2787</name>
</gene>
<reference key="1">
    <citation type="journal article" date="2004" name="Nucleic Acids Res.">
        <title>The genome sequence of Bacillus cereus ATCC 10987 reveals metabolic adaptations and a large plasmid related to Bacillus anthracis pXO1.</title>
        <authorList>
            <person name="Rasko D.A."/>
            <person name="Ravel J."/>
            <person name="Oekstad O.A."/>
            <person name="Helgason E."/>
            <person name="Cer R.Z."/>
            <person name="Jiang L."/>
            <person name="Shores K.A."/>
            <person name="Fouts D.E."/>
            <person name="Tourasse N.J."/>
            <person name="Angiuoli S.V."/>
            <person name="Kolonay J.F."/>
            <person name="Nelson W.C."/>
            <person name="Kolstoe A.-B."/>
            <person name="Fraser C.M."/>
            <person name="Read T.D."/>
        </authorList>
    </citation>
    <scope>NUCLEOTIDE SEQUENCE [LARGE SCALE GENOMIC DNA]</scope>
    <source>
        <strain>ATCC 10987 / NRS 248</strain>
    </source>
</reference>